<protein>
    <recommendedName>
        <fullName evidence="4">Protein ABHD14A</fullName>
        <ecNumber>3.-.-.-</ecNumber>
    </recommendedName>
    <alternativeName>
        <fullName evidence="4">Alpha/beta hydrolase domain-containing protein 14A</fullName>
        <shortName evidence="2">Abhydrolase domain-containing protein 14A</shortName>
    </alternativeName>
</protein>
<organism>
    <name type="scientific">Danio rerio</name>
    <name type="common">Zebrafish</name>
    <name type="synonym">Brachydanio rerio</name>
    <dbReference type="NCBI Taxonomy" id="7955"/>
    <lineage>
        <taxon>Eukaryota</taxon>
        <taxon>Metazoa</taxon>
        <taxon>Chordata</taxon>
        <taxon>Craniata</taxon>
        <taxon>Vertebrata</taxon>
        <taxon>Euteleostomi</taxon>
        <taxon>Actinopterygii</taxon>
        <taxon>Neopterygii</taxon>
        <taxon>Teleostei</taxon>
        <taxon>Ostariophysi</taxon>
        <taxon>Cypriniformes</taxon>
        <taxon>Danionidae</taxon>
        <taxon>Danioninae</taxon>
        <taxon>Danio</taxon>
    </lineage>
</organism>
<name>ABHEA_DANRE</name>
<evidence type="ECO:0000250" key="1"/>
<evidence type="ECO:0000250" key="2">
    <source>
        <dbReference type="UniProtKB" id="Q9BUJ0"/>
    </source>
</evidence>
<evidence type="ECO:0000255" key="3"/>
<evidence type="ECO:0000305" key="4"/>
<dbReference type="EC" id="3.-.-.-"/>
<dbReference type="EMBL" id="BX908398">
    <property type="protein sequence ID" value="CAK04596.1"/>
    <property type="molecule type" value="Genomic_DNA"/>
</dbReference>
<dbReference type="EMBL" id="BC066291">
    <property type="protein sequence ID" value="AAH66291.1"/>
    <property type="status" value="ALT_INIT"/>
    <property type="molecule type" value="mRNA"/>
</dbReference>
<dbReference type="RefSeq" id="NP_996949.2">
    <property type="nucleotide sequence ID" value="NM_207066.2"/>
</dbReference>
<dbReference type="SMR" id="Q1LV46"/>
<dbReference type="FunCoup" id="Q1LV46">
    <property type="interactions" value="132"/>
</dbReference>
<dbReference type="STRING" id="7955.ENSDARP00000075671"/>
<dbReference type="ESTHER" id="danre-abhea">
    <property type="family name" value="CIB-CCG1-interacting-factor-B"/>
</dbReference>
<dbReference type="MEROPS" id="S33.981"/>
<dbReference type="GlyCosmos" id="Q1LV46">
    <property type="glycosylation" value="2 sites, No reported glycans"/>
</dbReference>
<dbReference type="PaxDb" id="7955-ENSDARP00000109466"/>
<dbReference type="Ensembl" id="ENSDART00000081228">
    <property type="protein sequence ID" value="ENSDARP00000075671"/>
    <property type="gene ID" value="ENSDARG00000058367"/>
</dbReference>
<dbReference type="GeneID" id="404598"/>
<dbReference type="KEGG" id="dre:404598"/>
<dbReference type="AGR" id="ZFIN:ZDB-GENE-040426-2428"/>
<dbReference type="CTD" id="25864"/>
<dbReference type="ZFIN" id="ZDB-GENE-040426-2428">
    <property type="gene designation" value="abhd14a"/>
</dbReference>
<dbReference type="eggNOG" id="ENOG502QR0B">
    <property type="taxonomic scope" value="Eukaryota"/>
</dbReference>
<dbReference type="HOGENOM" id="CLU_020336_28_2_1"/>
<dbReference type="InParanoid" id="Q1LV46"/>
<dbReference type="OMA" id="IQLPNHE"/>
<dbReference type="OrthoDB" id="284184at2759"/>
<dbReference type="PhylomeDB" id="Q1LV46"/>
<dbReference type="TreeFam" id="TF314465"/>
<dbReference type="PRO" id="PR:Q1LV46"/>
<dbReference type="Proteomes" id="UP000000437">
    <property type="component" value="Chromosome 22"/>
</dbReference>
<dbReference type="Bgee" id="ENSDARG00000058367">
    <property type="expression patterns" value="Expressed in mature ovarian follicle and 20 other cell types or tissues"/>
</dbReference>
<dbReference type="GO" id="GO:0005737">
    <property type="term" value="C:cytoplasm"/>
    <property type="evidence" value="ECO:0000318"/>
    <property type="project" value="GO_Central"/>
</dbReference>
<dbReference type="GO" id="GO:0016020">
    <property type="term" value="C:membrane"/>
    <property type="evidence" value="ECO:0007669"/>
    <property type="project" value="UniProtKB-SubCell"/>
</dbReference>
<dbReference type="GO" id="GO:0016787">
    <property type="term" value="F:hydrolase activity"/>
    <property type="evidence" value="ECO:0007669"/>
    <property type="project" value="UniProtKB-KW"/>
</dbReference>
<dbReference type="FunFam" id="3.40.50.1820:FF:000077">
    <property type="entry name" value="Abhydrolase domain containing 14B"/>
    <property type="match status" value="1"/>
</dbReference>
<dbReference type="Gene3D" id="3.40.50.1820">
    <property type="entry name" value="alpha/beta hydrolase"/>
    <property type="match status" value="1"/>
</dbReference>
<dbReference type="InterPro" id="IPR000073">
    <property type="entry name" value="AB_hydrolase_1"/>
</dbReference>
<dbReference type="InterPro" id="IPR029058">
    <property type="entry name" value="AB_hydrolase_fold"/>
</dbReference>
<dbReference type="PANTHER" id="PTHR46197:SF1">
    <property type="entry name" value="PROTEIN ABHD14A"/>
    <property type="match status" value="1"/>
</dbReference>
<dbReference type="PANTHER" id="PTHR46197">
    <property type="entry name" value="PROTEIN ABHD14B-LIKE"/>
    <property type="match status" value="1"/>
</dbReference>
<dbReference type="Pfam" id="PF12697">
    <property type="entry name" value="Abhydrolase_6"/>
    <property type="match status" value="1"/>
</dbReference>
<dbReference type="SUPFAM" id="SSF53474">
    <property type="entry name" value="alpha/beta-Hydrolases"/>
    <property type="match status" value="1"/>
</dbReference>
<sequence length="270" mass="29664">MMNFLRNRLVVLGLVLLATVLLYLLLPSMRQGSMEPSLEVQQRMGLMAATPPPPPPPSSVNITVRTGQLPGDPPLFFREALPVDSAGRQILPRLQMVLLHGQAFTSKTWEELGTLSLLASSGYQALALDLPGYGNSPDSESVKSDQSRVDLLKRFLEALGVRAPVLLSPSMSGHYALPFLQRHSAQLHGFVPIAPVGTRGITPQQYHDIQTPTLIIYGELDTNLGAQSHKNLIQLPNHTVVKLAGARHACYMDKPREFHRALLDFLSKLD</sequence>
<gene>
    <name evidence="2" type="primary">abhd14a</name>
    <name type="ORF">si:ch211-231a1.1</name>
    <name type="ORF">zgc:85972</name>
</gene>
<accession>Q1LV46</accession>
<accession>Q6NZ71</accession>
<feature type="chain" id="PRO_0000282288" description="Protein ABHD14A">
    <location>
        <begin position="1"/>
        <end position="270"/>
    </location>
</feature>
<feature type="transmembrane region" description="Helical; Signal-anchor for type II membrane protein" evidence="3">
    <location>
        <begin position="9"/>
        <end position="29"/>
    </location>
</feature>
<feature type="active site" description="Charge relay system" evidence="1">
    <location>
        <position position="170"/>
    </location>
</feature>
<feature type="active site" description="Charge relay system" evidence="1">
    <location>
        <position position="221"/>
    </location>
</feature>
<feature type="active site" description="Charge relay system" evidence="1">
    <location>
        <position position="248"/>
    </location>
</feature>
<feature type="glycosylation site" description="N-linked (GlcNAc...) asparagine" evidence="3">
    <location>
        <position position="61"/>
    </location>
</feature>
<feature type="glycosylation site" description="N-linked (GlcNAc...) asparagine" evidence="3">
    <location>
        <position position="237"/>
    </location>
</feature>
<reference key="1">
    <citation type="journal article" date="2013" name="Nature">
        <title>The zebrafish reference genome sequence and its relationship to the human genome.</title>
        <authorList>
            <person name="Howe K."/>
            <person name="Clark M.D."/>
            <person name="Torroja C.F."/>
            <person name="Torrance J."/>
            <person name="Berthelot C."/>
            <person name="Muffato M."/>
            <person name="Collins J.E."/>
            <person name="Humphray S."/>
            <person name="McLaren K."/>
            <person name="Matthews L."/>
            <person name="McLaren S."/>
            <person name="Sealy I."/>
            <person name="Caccamo M."/>
            <person name="Churcher C."/>
            <person name="Scott C."/>
            <person name="Barrett J.C."/>
            <person name="Koch R."/>
            <person name="Rauch G.J."/>
            <person name="White S."/>
            <person name="Chow W."/>
            <person name="Kilian B."/>
            <person name="Quintais L.T."/>
            <person name="Guerra-Assuncao J.A."/>
            <person name="Zhou Y."/>
            <person name="Gu Y."/>
            <person name="Yen J."/>
            <person name="Vogel J.H."/>
            <person name="Eyre T."/>
            <person name="Redmond S."/>
            <person name="Banerjee R."/>
            <person name="Chi J."/>
            <person name="Fu B."/>
            <person name="Langley E."/>
            <person name="Maguire S.F."/>
            <person name="Laird G.K."/>
            <person name="Lloyd D."/>
            <person name="Kenyon E."/>
            <person name="Donaldson S."/>
            <person name="Sehra H."/>
            <person name="Almeida-King J."/>
            <person name="Loveland J."/>
            <person name="Trevanion S."/>
            <person name="Jones M."/>
            <person name="Quail M."/>
            <person name="Willey D."/>
            <person name="Hunt A."/>
            <person name="Burton J."/>
            <person name="Sims S."/>
            <person name="McLay K."/>
            <person name="Plumb B."/>
            <person name="Davis J."/>
            <person name="Clee C."/>
            <person name="Oliver K."/>
            <person name="Clark R."/>
            <person name="Riddle C."/>
            <person name="Elliot D."/>
            <person name="Threadgold G."/>
            <person name="Harden G."/>
            <person name="Ware D."/>
            <person name="Begum S."/>
            <person name="Mortimore B."/>
            <person name="Kerry G."/>
            <person name="Heath P."/>
            <person name="Phillimore B."/>
            <person name="Tracey A."/>
            <person name="Corby N."/>
            <person name="Dunn M."/>
            <person name="Johnson C."/>
            <person name="Wood J."/>
            <person name="Clark S."/>
            <person name="Pelan S."/>
            <person name="Griffiths G."/>
            <person name="Smith M."/>
            <person name="Glithero R."/>
            <person name="Howden P."/>
            <person name="Barker N."/>
            <person name="Lloyd C."/>
            <person name="Stevens C."/>
            <person name="Harley J."/>
            <person name="Holt K."/>
            <person name="Panagiotidis G."/>
            <person name="Lovell J."/>
            <person name="Beasley H."/>
            <person name="Henderson C."/>
            <person name="Gordon D."/>
            <person name="Auger K."/>
            <person name="Wright D."/>
            <person name="Collins J."/>
            <person name="Raisen C."/>
            <person name="Dyer L."/>
            <person name="Leung K."/>
            <person name="Robertson L."/>
            <person name="Ambridge K."/>
            <person name="Leongamornlert D."/>
            <person name="McGuire S."/>
            <person name="Gilderthorp R."/>
            <person name="Griffiths C."/>
            <person name="Manthravadi D."/>
            <person name="Nichol S."/>
            <person name="Barker G."/>
            <person name="Whitehead S."/>
            <person name="Kay M."/>
            <person name="Brown J."/>
            <person name="Murnane C."/>
            <person name="Gray E."/>
            <person name="Humphries M."/>
            <person name="Sycamore N."/>
            <person name="Barker D."/>
            <person name="Saunders D."/>
            <person name="Wallis J."/>
            <person name="Babbage A."/>
            <person name="Hammond S."/>
            <person name="Mashreghi-Mohammadi M."/>
            <person name="Barr L."/>
            <person name="Martin S."/>
            <person name="Wray P."/>
            <person name="Ellington A."/>
            <person name="Matthews N."/>
            <person name="Ellwood M."/>
            <person name="Woodmansey R."/>
            <person name="Clark G."/>
            <person name="Cooper J."/>
            <person name="Tromans A."/>
            <person name="Grafham D."/>
            <person name="Skuce C."/>
            <person name="Pandian R."/>
            <person name="Andrews R."/>
            <person name="Harrison E."/>
            <person name="Kimberley A."/>
            <person name="Garnett J."/>
            <person name="Fosker N."/>
            <person name="Hall R."/>
            <person name="Garner P."/>
            <person name="Kelly D."/>
            <person name="Bird C."/>
            <person name="Palmer S."/>
            <person name="Gehring I."/>
            <person name="Berger A."/>
            <person name="Dooley C.M."/>
            <person name="Ersan-Urun Z."/>
            <person name="Eser C."/>
            <person name="Geiger H."/>
            <person name="Geisler M."/>
            <person name="Karotki L."/>
            <person name="Kirn A."/>
            <person name="Konantz J."/>
            <person name="Konantz M."/>
            <person name="Oberlander M."/>
            <person name="Rudolph-Geiger S."/>
            <person name="Teucke M."/>
            <person name="Lanz C."/>
            <person name="Raddatz G."/>
            <person name="Osoegawa K."/>
            <person name="Zhu B."/>
            <person name="Rapp A."/>
            <person name="Widaa S."/>
            <person name="Langford C."/>
            <person name="Yang F."/>
            <person name="Schuster S.C."/>
            <person name="Carter N.P."/>
            <person name="Harrow J."/>
            <person name="Ning Z."/>
            <person name="Herrero J."/>
            <person name="Searle S.M."/>
            <person name="Enright A."/>
            <person name="Geisler R."/>
            <person name="Plasterk R.H."/>
            <person name="Lee C."/>
            <person name="Westerfield M."/>
            <person name="de Jong P.J."/>
            <person name="Zon L.I."/>
            <person name="Postlethwait J.H."/>
            <person name="Nusslein-Volhard C."/>
            <person name="Hubbard T.J."/>
            <person name="Roest Crollius H."/>
            <person name="Rogers J."/>
            <person name="Stemple D.L."/>
        </authorList>
    </citation>
    <scope>NUCLEOTIDE SEQUENCE [LARGE SCALE GENOMIC DNA]</scope>
    <source>
        <strain>Tuebingen</strain>
    </source>
</reference>
<reference key="2">
    <citation type="submission" date="2004-02" db="EMBL/GenBank/DDBJ databases">
        <authorList>
            <consortium name="NIH - Zebrafish Gene Collection (ZGC) project"/>
        </authorList>
    </citation>
    <scope>NUCLEOTIDE SEQUENCE [LARGE SCALE MRNA]</scope>
    <source>
        <tissue>Embryo</tissue>
    </source>
</reference>
<proteinExistence type="evidence at transcript level"/>
<keyword id="KW-0963">Cytoplasm</keyword>
<keyword id="KW-0325">Glycoprotein</keyword>
<keyword id="KW-0378">Hydrolase</keyword>
<keyword id="KW-0472">Membrane</keyword>
<keyword id="KW-1185">Reference proteome</keyword>
<keyword id="KW-0735">Signal-anchor</keyword>
<keyword id="KW-0812">Transmembrane</keyword>
<keyword id="KW-1133">Transmembrane helix</keyword>
<comment type="function">
    <text evidence="1">Possible role in granule neuron development.</text>
</comment>
<comment type="subcellular location">
    <subcellularLocation>
        <location evidence="1">Cytoplasm</location>
    </subcellularLocation>
    <subcellularLocation>
        <location evidence="4">Membrane</location>
        <topology evidence="4">Single-pass type II membrane protein</topology>
    </subcellularLocation>
</comment>
<comment type="similarity">
    <text evidence="4">Belongs to the AB hydrolase superfamily. ABHD14 family.</text>
</comment>
<comment type="sequence caution" evidence="4">
    <conflict type="erroneous initiation">
        <sequence resource="EMBL-CDS" id="AAH66291"/>
    </conflict>
</comment>